<proteinExistence type="inferred from homology"/>
<protein>
    <recommendedName>
        <fullName evidence="1">Leucine--tRNA ligase</fullName>
        <ecNumber evidence="1">6.1.1.4</ecNumber>
    </recommendedName>
    <alternativeName>
        <fullName evidence="1">Leucyl-tRNA synthetase</fullName>
        <shortName evidence="1">LeuRS</shortName>
    </alternativeName>
</protein>
<evidence type="ECO:0000255" key="1">
    <source>
        <dbReference type="HAMAP-Rule" id="MF_00049"/>
    </source>
</evidence>
<dbReference type="EC" id="6.1.1.4" evidence="1"/>
<dbReference type="EMBL" id="CP000095">
    <property type="protein sequence ID" value="AAZ57813.1"/>
    <property type="molecule type" value="Genomic_DNA"/>
</dbReference>
<dbReference type="RefSeq" id="WP_011293855.1">
    <property type="nucleotide sequence ID" value="NC_007335.2"/>
</dbReference>
<dbReference type="SMR" id="Q46L15"/>
<dbReference type="STRING" id="59920.PMN2A_0321"/>
<dbReference type="KEGG" id="pmn:PMN2A_0321"/>
<dbReference type="HOGENOM" id="CLU_004427_0_0_3"/>
<dbReference type="OrthoDB" id="9810365at2"/>
<dbReference type="PhylomeDB" id="Q46L15"/>
<dbReference type="Proteomes" id="UP000002535">
    <property type="component" value="Chromosome"/>
</dbReference>
<dbReference type="GO" id="GO:0005829">
    <property type="term" value="C:cytosol"/>
    <property type="evidence" value="ECO:0007669"/>
    <property type="project" value="TreeGrafter"/>
</dbReference>
<dbReference type="GO" id="GO:0002161">
    <property type="term" value="F:aminoacyl-tRNA deacylase activity"/>
    <property type="evidence" value="ECO:0007669"/>
    <property type="project" value="InterPro"/>
</dbReference>
<dbReference type="GO" id="GO:0005524">
    <property type="term" value="F:ATP binding"/>
    <property type="evidence" value="ECO:0007669"/>
    <property type="project" value="UniProtKB-UniRule"/>
</dbReference>
<dbReference type="GO" id="GO:0004823">
    <property type="term" value="F:leucine-tRNA ligase activity"/>
    <property type="evidence" value="ECO:0007669"/>
    <property type="project" value="UniProtKB-UniRule"/>
</dbReference>
<dbReference type="GO" id="GO:0006429">
    <property type="term" value="P:leucyl-tRNA aminoacylation"/>
    <property type="evidence" value="ECO:0007669"/>
    <property type="project" value="UniProtKB-UniRule"/>
</dbReference>
<dbReference type="CDD" id="cd07958">
    <property type="entry name" value="Anticodon_Ia_Leu_BEm"/>
    <property type="match status" value="1"/>
</dbReference>
<dbReference type="CDD" id="cd00812">
    <property type="entry name" value="LeuRS_core"/>
    <property type="match status" value="1"/>
</dbReference>
<dbReference type="FunFam" id="3.40.50.620:FF:000003">
    <property type="entry name" value="Leucine--tRNA ligase"/>
    <property type="match status" value="1"/>
</dbReference>
<dbReference type="FunFam" id="1.10.730.10:FF:000011">
    <property type="entry name" value="Leucine--tRNA ligase chloroplastic/mitochondrial"/>
    <property type="match status" value="1"/>
</dbReference>
<dbReference type="FunFam" id="3.40.50.620:FF:000100">
    <property type="entry name" value="probable leucine--tRNA ligase, mitochondrial"/>
    <property type="match status" value="1"/>
</dbReference>
<dbReference type="Gene3D" id="3.40.50.620">
    <property type="entry name" value="HUPs"/>
    <property type="match status" value="2"/>
</dbReference>
<dbReference type="Gene3D" id="1.10.730.10">
    <property type="entry name" value="Isoleucyl-tRNA Synthetase, Domain 1"/>
    <property type="match status" value="1"/>
</dbReference>
<dbReference type="HAMAP" id="MF_00049_B">
    <property type="entry name" value="Leu_tRNA_synth_B"/>
    <property type="match status" value="1"/>
</dbReference>
<dbReference type="InterPro" id="IPR001412">
    <property type="entry name" value="aa-tRNA-synth_I_CS"/>
</dbReference>
<dbReference type="InterPro" id="IPR002300">
    <property type="entry name" value="aa-tRNA-synth_Ia"/>
</dbReference>
<dbReference type="InterPro" id="IPR002302">
    <property type="entry name" value="Leu-tRNA-ligase"/>
</dbReference>
<dbReference type="InterPro" id="IPR025709">
    <property type="entry name" value="Leu_tRNA-synth_edit"/>
</dbReference>
<dbReference type="InterPro" id="IPR013155">
    <property type="entry name" value="M/V/L/I-tRNA-synth_anticd-bd"/>
</dbReference>
<dbReference type="InterPro" id="IPR015413">
    <property type="entry name" value="Methionyl/Leucyl_tRNA_Synth"/>
</dbReference>
<dbReference type="InterPro" id="IPR014729">
    <property type="entry name" value="Rossmann-like_a/b/a_fold"/>
</dbReference>
<dbReference type="InterPro" id="IPR009080">
    <property type="entry name" value="tRNAsynth_Ia_anticodon-bd"/>
</dbReference>
<dbReference type="InterPro" id="IPR009008">
    <property type="entry name" value="Val/Leu/Ile-tRNA-synth_edit"/>
</dbReference>
<dbReference type="NCBIfam" id="TIGR00396">
    <property type="entry name" value="leuS_bact"/>
    <property type="match status" value="1"/>
</dbReference>
<dbReference type="PANTHER" id="PTHR43740:SF2">
    <property type="entry name" value="LEUCINE--TRNA LIGASE, MITOCHONDRIAL"/>
    <property type="match status" value="1"/>
</dbReference>
<dbReference type="PANTHER" id="PTHR43740">
    <property type="entry name" value="LEUCYL-TRNA SYNTHETASE"/>
    <property type="match status" value="1"/>
</dbReference>
<dbReference type="Pfam" id="PF08264">
    <property type="entry name" value="Anticodon_1"/>
    <property type="match status" value="1"/>
</dbReference>
<dbReference type="Pfam" id="PF00133">
    <property type="entry name" value="tRNA-synt_1"/>
    <property type="match status" value="2"/>
</dbReference>
<dbReference type="Pfam" id="PF13603">
    <property type="entry name" value="tRNA-synt_1_2"/>
    <property type="match status" value="1"/>
</dbReference>
<dbReference type="Pfam" id="PF09334">
    <property type="entry name" value="tRNA-synt_1g"/>
    <property type="match status" value="1"/>
</dbReference>
<dbReference type="PRINTS" id="PR00985">
    <property type="entry name" value="TRNASYNTHLEU"/>
</dbReference>
<dbReference type="SUPFAM" id="SSF47323">
    <property type="entry name" value="Anticodon-binding domain of a subclass of class I aminoacyl-tRNA synthetases"/>
    <property type="match status" value="1"/>
</dbReference>
<dbReference type="SUPFAM" id="SSF52374">
    <property type="entry name" value="Nucleotidylyl transferase"/>
    <property type="match status" value="1"/>
</dbReference>
<dbReference type="SUPFAM" id="SSF50677">
    <property type="entry name" value="ValRS/IleRS/LeuRS editing domain"/>
    <property type="match status" value="1"/>
</dbReference>
<dbReference type="PROSITE" id="PS00178">
    <property type="entry name" value="AA_TRNA_LIGASE_I"/>
    <property type="match status" value="1"/>
</dbReference>
<name>SYL_PROMT</name>
<feature type="chain" id="PRO_0000334792" description="Leucine--tRNA ligase">
    <location>
        <begin position="1"/>
        <end position="862"/>
    </location>
</feature>
<feature type="short sequence motif" description="'HIGH' region">
    <location>
        <begin position="51"/>
        <end position="61"/>
    </location>
</feature>
<feature type="short sequence motif" description="'KMSKS' region">
    <location>
        <begin position="624"/>
        <end position="628"/>
    </location>
</feature>
<feature type="binding site" evidence="1">
    <location>
        <position position="627"/>
    </location>
    <ligand>
        <name>ATP</name>
        <dbReference type="ChEBI" id="CHEBI:30616"/>
    </ligand>
</feature>
<keyword id="KW-0030">Aminoacyl-tRNA synthetase</keyword>
<keyword id="KW-0067">ATP-binding</keyword>
<keyword id="KW-0963">Cytoplasm</keyword>
<keyword id="KW-0436">Ligase</keyword>
<keyword id="KW-0547">Nucleotide-binding</keyword>
<keyword id="KW-0648">Protein biosynthesis</keyword>
<keyword id="KW-1185">Reference proteome</keyword>
<sequence>MNNTTSDINDQRYEPREVEAYWQKEWASDDLYRTNTEVNKENTFYALSMFPYPSGSLHMGHVRNYVITDVLARYKRMKGFNVLHPMGWDSFGLPAENAAIEREISPSTWTDKNISQMKDQLDRLGLSIDWSKEVTTCKEEYYKWTQYIFNQLHKNNLAYQKKATVNWDPIDQTVLANEQVDAEGKSWRSGAKVEKKELNQWFLRITSFAEDLNKDLIKLNDWPDRVRVMQKNWIGKSIGAEITFEIKNSDQKITAFTTRIDTVYGVSYLVLASNHPLIDQLISSNDIDKLNDFRQTQEKLSDLERNSDTRQKLGMYLGVDAINPANNKEIPIWIGDYVIMEYGTGAVMGVPAHDSRDYQFAKSYDLPIQYVIKPNIDEDESYLNAEFVDKGIMINSDKFNGIESDIAKTQILEFGSNSNWAKPKITYKLRDWLISRQRYWGCPIPIINCKKCGQVRVPDNDLPVVLPIDIKLTGKGKSPLTTKTEWINTCCPKCGTEAKRETDTMDTFMCSSWYFLRYINPDNCEKPFLKSEIDKWLPVKQYVGGIEHAILHLLYSRFLTKALKKCGLINIDEPFKKLLTQGMVQAVTFKNPNTNKYFSKDQIKDIDNPKDPLTGENIEIIYEKMSKSKYNGVDPSVVIDKYGADTARMFILFKAPPEKDLEWDDSDVEGQYRFIQRLWKFVINTFKLTNNNSRSNIEKEKSKDEEALRLINIAIKEITDDLDNLQFNTAISELMKVVNGLSLIVNYCSNETLNKVISILVKITSPFSPHIAEELWKTIGNTQSIHLQSWPEFDAGAIEQDTFKLMIQINGKVRGSINASKNLSKENLEDLAIKTEAAIKWMDGKEPKRIIVVPNKLVNIVI</sequence>
<reference key="1">
    <citation type="journal article" date="2007" name="PLoS Genet.">
        <title>Patterns and implications of gene gain and loss in the evolution of Prochlorococcus.</title>
        <authorList>
            <person name="Kettler G.C."/>
            <person name="Martiny A.C."/>
            <person name="Huang K."/>
            <person name="Zucker J."/>
            <person name="Coleman M.L."/>
            <person name="Rodrigue S."/>
            <person name="Chen F."/>
            <person name="Lapidus A."/>
            <person name="Ferriera S."/>
            <person name="Johnson J."/>
            <person name="Steglich C."/>
            <person name="Church G.M."/>
            <person name="Richardson P."/>
            <person name="Chisholm S.W."/>
        </authorList>
    </citation>
    <scope>NUCLEOTIDE SEQUENCE [LARGE SCALE GENOMIC DNA]</scope>
    <source>
        <strain>NATL2A</strain>
    </source>
</reference>
<accession>Q46L15</accession>
<gene>
    <name evidence="1" type="primary">leuS</name>
    <name type="ordered locus">PMN2A_0321</name>
</gene>
<comment type="catalytic activity">
    <reaction evidence="1">
        <text>tRNA(Leu) + L-leucine + ATP = L-leucyl-tRNA(Leu) + AMP + diphosphate</text>
        <dbReference type="Rhea" id="RHEA:11688"/>
        <dbReference type="Rhea" id="RHEA-COMP:9613"/>
        <dbReference type="Rhea" id="RHEA-COMP:9622"/>
        <dbReference type="ChEBI" id="CHEBI:30616"/>
        <dbReference type="ChEBI" id="CHEBI:33019"/>
        <dbReference type="ChEBI" id="CHEBI:57427"/>
        <dbReference type="ChEBI" id="CHEBI:78442"/>
        <dbReference type="ChEBI" id="CHEBI:78494"/>
        <dbReference type="ChEBI" id="CHEBI:456215"/>
        <dbReference type="EC" id="6.1.1.4"/>
    </reaction>
</comment>
<comment type="subcellular location">
    <subcellularLocation>
        <location evidence="1">Cytoplasm</location>
    </subcellularLocation>
</comment>
<comment type="similarity">
    <text evidence="1">Belongs to the class-I aminoacyl-tRNA synthetase family.</text>
</comment>
<organism>
    <name type="scientific">Prochlorococcus marinus (strain NATL2A)</name>
    <dbReference type="NCBI Taxonomy" id="59920"/>
    <lineage>
        <taxon>Bacteria</taxon>
        <taxon>Bacillati</taxon>
        <taxon>Cyanobacteriota</taxon>
        <taxon>Cyanophyceae</taxon>
        <taxon>Synechococcales</taxon>
        <taxon>Prochlorococcaceae</taxon>
        <taxon>Prochlorococcus</taxon>
    </lineage>
</organism>